<protein>
    <recommendedName>
        <fullName evidence="5">Small ribosomal subunit protein uS12</fullName>
    </recommendedName>
    <alternativeName>
        <fullName>40S ribosomal protein S23</fullName>
    </alternativeName>
</protein>
<sequence length="143" mass="15808">MGKCRGLRTARKLRSHRRDQKWHDKQYKKAHLGTALKANPFGGASHAKGIVLEKVGVEAKQPNSAIRKCVRVQLIKNGKKITAFVPNDGCLNFIEENDEVLVAGFGRKGHAVGDIPGVRFKVVKVANVSLLALYKGKKERPRS</sequence>
<comment type="function">
    <text evidence="1">Component of the ribosome, a large ribonucleoprotein complex responsible for the synthesis of proteins in the cell. The small ribosomal subunit (SSU) binds messenger RNAs (mRNAs) and translates the encoded message by selecting cognate aminoacyl-transfer RNA (tRNA) molecules. The large subunit (LSU) contains the ribosomal catalytic site termed the peptidyl transferase center (PTC), which catalyzes the formation of peptide bonds, thereby polymerizing the amino acids delivered by tRNAs into a polypeptide chain. The nascent polypeptides leave the ribosome through a tunnel in the LSU and interact with protein factors that function in enzymatic processing, targeting, and the membrane insertion of nascent chains at the exit of the ribosomal tunnel. Plays an important role in translational accuracy. Part of the small subunit (SSU) processome, first precursor of the small eukaryotic ribosomal subunit. During the assembly of the SSU processome in the nucleolus, many ribosome biogenesis factors, an RNA chaperone and ribosomal proteins associate with the nascent pre-rRNA and work in concert to generate RNA folding, modifications, rearrangements and cleavage as well as targeted degradation of pre-ribosomal RNA by the RNA exosome.</text>
</comment>
<comment type="subunit">
    <text evidence="1">Component of the 40S small ribosomal subunit. Part of the small subunit (SSU) processome, composed of more than 70 proteins and the RNA chaperone small nucleolar RNA (snoRNA) U3.</text>
</comment>
<comment type="subcellular location">
    <subcellularLocation>
        <location evidence="1">Cytoplasm</location>
        <location evidence="1">Cytosol</location>
    </subcellularLocation>
    <subcellularLocation>
        <location evidence="1">Cytoplasm</location>
    </subcellularLocation>
    <subcellularLocation>
        <location evidence="3">Rough endoplasmic reticulum</location>
    </subcellularLocation>
    <subcellularLocation>
        <location evidence="1">Nucleus</location>
        <location evidence="1">Nucleolus</location>
    </subcellularLocation>
    <text evidence="1 3">Detected on cytosolic polysomes (By similarity). Detected in ribosomes that are associated with the rough endoplasmic reticulum (By similarity).</text>
</comment>
<comment type="PTM">
    <text evidence="1">Hydroxylation at Pro-62 affects translation termination efficiency.</text>
</comment>
<comment type="similarity">
    <text evidence="5">Belongs to the universal ribosomal protein uS12 family.</text>
</comment>
<evidence type="ECO:0000250" key="1">
    <source>
        <dbReference type="UniProtKB" id="P62266"/>
    </source>
</evidence>
<evidence type="ECO:0000250" key="2">
    <source>
        <dbReference type="UniProtKB" id="P62267"/>
    </source>
</evidence>
<evidence type="ECO:0000250" key="3">
    <source>
        <dbReference type="UniProtKB" id="Q6SA96"/>
    </source>
</evidence>
<evidence type="ECO:0000256" key="4">
    <source>
        <dbReference type="SAM" id="MobiDB-lite"/>
    </source>
</evidence>
<evidence type="ECO:0000305" key="5"/>
<gene>
    <name type="primary">RPS23</name>
</gene>
<keyword id="KW-0007">Acetylation</keyword>
<keyword id="KW-0963">Cytoplasm</keyword>
<keyword id="KW-0256">Endoplasmic reticulum</keyword>
<keyword id="KW-0379">Hydroxylation</keyword>
<keyword id="KW-1017">Isopeptide bond</keyword>
<keyword id="KW-0539">Nucleus</keyword>
<keyword id="KW-1185">Reference proteome</keyword>
<keyword id="KW-0687">Ribonucleoprotein</keyword>
<keyword id="KW-0689">Ribosomal protein</keyword>
<keyword id="KW-0832">Ubl conjugation</keyword>
<reference key="1">
    <citation type="submission" date="2004-01" db="EMBL/GenBank/DDBJ databases">
        <title>Gene expression in normal chinchilla middle ear mucosa.</title>
        <authorList>
            <person name="Erdos G."/>
            <person name="Hu F.Z."/>
            <person name="Donfack J."/>
            <person name="Ahmed A.I."/>
            <person name="Preston R.A."/>
            <person name="Hayes J.D."/>
            <person name="Post J.C."/>
            <person name="Ehrlich G.D."/>
        </authorList>
    </citation>
    <scope>NUCLEOTIDE SEQUENCE [LARGE SCALE MRNA]</scope>
    <source>
        <tissue>Middle ear mucosa</tissue>
    </source>
</reference>
<name>RS23_CHILA</name>
<feature type="chain" id="PRO_0000146456" description="Small ribosomal subunit protein uS12">
    <location>
        <begin position="1"/>
        <end position="143"/>
    </location>
</feature>
<feature type="region of interest" description="Disordered" evidence="4">
    <location>
        <begin position="1"/>
        <end position="26"/>
    </location>
</feature>
<feature type="compositionally biased region" description="Basic residues" evidence="4">
    <location>
        <begin position="1"/>
        <end position="20"/>
    </location>
</feature>
<feature type="modified residue" description="N6-succinyllysine" evidence="2">
    <location>
        <position position="54"/>
    </location>
</feature>
<feature type="modified residue" description="3-hydroxyproline" evidence="1">
    <location>
        <position position="62"/>
    </location>
</feature>
<feature type="modified residue" description="N6-acetyllysine" evidence="1">
    <location>
        <position position="135"/>
    </location>
</feature>
<feature type="cross-link" description="Glycyl lysine isopeptide (Lys-Gly) (interchain with G-Cter in SUMO2)" evidence="1">
    <location>
        <position position="37"/>
    </location>
</feature>
<dbReference type="EMBL" id="AY533228">
    <property type="protein sequence ID" value="AAS59430.1"/>
    <property type="molecule type" value="mRNA"/>
</dbReference>
<dbReference type="RefSeq" id="NP_001269298.1">
    <property type="nucleotide sequence ID" value="NM_001282369.1"/>
</dbReference>
<dbReference type="SMR" id="P62298"/>
<dbReference type="Ensembl" id="ENSCLAT00000006925.1">
    <property type="protein sequence ID" value="ENSCLAP00000006813.1"/>
    <property type="gene ID" value="ENSCLAG00000004798.1"/>
</dbReference>
<dbReference type="GeneID" id="102011769"/>
<dbReference type="CTD" id="6228"/>
<dbReference type="GeneTree" id="ENSGT00550000074784"/>
<dbReference type="OMA" id="KFRWSQR"/>
<dbReference type="OrthoDB" id="9758353at2759"/>
<dbReference type="Proteomes" id="UP000694398">
    <property type="component" value="Unassembled WGS sequence"/>
</dbReference>
<dbReference type="GO" id="GO:0022627">
    <property type="term" value="C:cytosolic small ribosomal subunit"/>
    <property type="evidence" value="ECO:0000250"/>
    <property type="project" value="UniProtKB"/>
</dbReference>
<dbReference type="GO" id="GO:0005730">
    <property type="term" value="C:nucleolus"/>
    <property type="evidence" value="ECO:0007669"/>
    <property type="project" value="UniProtKB-SubCell"/>
</dbReference>
<dbReference type="GO" id="GO:0005791">
    <property type="term" value="C:rough endoplasmic reticulum"/>
    <property type="evidence" value="ECO:0007669"/>
    <property type="project" value="UniProtKB-SubCell"/>
</dbReference>
<dbReference type="GO" id="GO:0032040">
    <property type="term" value="C:small-subunit processome"/>
    <property type="evidence" value="ECO:0000250"/>
    <property type="project" value="UniProtKB"/>
</dbReference>
<dbReference type="GO" id="GO:0003735">
    <property type="term" value="F:structural constituent of ribosome"/>
    <property type="evidence" value="ECO:0007669"/>
    <property type="project" value="InterPro"/>
</dbReference>
<dbReference type="GO" id="GO:0002181">
    <property type="term" value="P:cytoplasmic translation"/>
    <property type="evidence" value="ECO:0000250"/>
    <property type="project" value="UniProtKB"/>
</dbReference>
<dbReference type="GO" id="GO:0042274">
    <property type="term" value="P:ribosomal small subunit biogenesis"/>
    <property type="evidence" value="ECO:0000250"/>
    <property type="project" value="UniProtKB"/>
</dbReference>
<dbReference type="CDD" id="cd03367">
    <property type="entry name" value="Ribosomal_S23"/>
    <property type="match status" value="1"/>
</dbReference>
<dbReference type="FunFam" id="2.40.50.140:FF:000007">
    <property type="entry name" value="40S ribosomal protein S23"/>
    <property type="match status" value="1"/>
</dbReference>
<dbReference type="Gene3D" id="2.40.50.140">
    <property type="entry name" value="Nucleic acid-binding proteins"/>
    <property type="match status" value="1"/>
</dbReference>
<dbReference type="InterPro" id="IPR012340">
    <property type="entry name" value="NA-bd_OB-fold"/>
</dbReference>
<dbReference type="InterPro" id="IPR006032">
    <property type="entry name" value="Ribosomal_uS12"/>
</dbReference>
<dbReference type="InterPro" id="IPR005680">
    <property type="entry name" value="Ribosomal_uS12_euk/arc"/>
</dbReference>
<dbReference type="NCBIfam" id="NF003254">
    <property type="entry name" value="PRK04211.1"/>
    <property type="match status" value="1"/>
</dbReference>
<dbReference type="NCBIfam" id="TIGR00982">
    <property type="entry name" value="uS12_E_A"/>
    <property type="match status" value="1"/>
</dbReference>
<dbReference type="PANTHER" id="PTHR11652">
    <property type="entry name" value="30S RIBOSOMAL PROTEIN S12 FAMILY MEMBER"/>
    <property type="match status" value="1"/>
</dbReference>
<dbReference type="Pfam" id="PF00164">
    <property type="entry name" value="Ribosom_S12_S23"/>
    <property type="match status" value="1"/>
</dbReference>
<dbReference type="PIRSF" id="PIRSF002133">
    <property type="entry name" value="Ribosomal_S12/S23"/>
    <property type="match status" value="1"/>
</dbReference>
<dbReference type="SUPFAM" id="SSF50249">
    <property type="entry name" value="Nucleic acid-binding proteins"/>
    <property type="match status" value="1"/>
</dbReference>
<dbReference type="PROSITE" id="PS00055">
    <property type="entry name" value="RIBOSOMAL_S12"/>
    <property type="match status" value="1"/>
</dbReference>
<organism>
    <name type="scientific">Chinchilla lanigera</name>
    <name type="common">Long-tailed chinchilla</name>
    <name type="synonym">Chinchilla villidera</name>
    <dbReference type="NCBI Taxonomy" id="34839"/>
    <lineage>
        <taxon>Eukaryota</taxon>
        <taxon>Metazoa</taxon>
        <taxon>Chordata</taxon>
        <taxon>Craniata</taxon>
        <taxon>Vertebrata</taxon>
        <taxon>Euteleostomi</taxon>
        <taxon>Mammalia</taxon>
        <taxon>Eutheria</taxon>
        <taxon>Euarchontoglires</taxon>
        <taxon>Glires</taxon>
        <taxon>Rodentia</taxon>
        <taxon>Hystricomorpha</taxon>
        <taxon>Chinchillidae</taxon>
        <taxon>Chinchilla</taxon>
    </lineage>
</organism>
<accession>P62298</accession>
<proteinExistence type="evidence at transcript level"/>